<dbReference type="EMBL" id="BC083791">
    <property type="protein sequence ID" value="AAH83791.1"/>
    <property type="molecule type" value="mRNA"/>
</dbReference>
<dbReference type="RefSeq" id="NP_001007008.1">
    <property type="nucleotide sequence ID" value="NM_001007007.1"/>
</dbReference>
<dbReference type="SMR" id="Q5XI96"/>
<dbReference type="FunCoup" id="Q5XI96">
    <property type="interactions" value="1540"/>
</dbReference>
<dbReference type="STRING" id="10116.ENSRNOP00000012231"/>
<dbReference type="PhosphoSitePlus" id="Q5XI96"/>
<dbReference type="PaxDb" id="10116-ENSRNOP00000012231"/>
<dbReference type="GeneID" id="361056"/>
<dbReference type="KEGG" id="rno:361056"/>
<dbReference type="UCSC" id="RGD:1359710">
    <property type="organism name" value="rat"/>
</dbReference>
<dbReference type="AGR" id="RGD:1359710"/>
<dbReference type="CTD" id="79621"/>
<dbReference type="RGD" id="1359710">
    <property type="gene designation" value="Rnaseh2b"/>
</dbReference>
<dbReference type="VEuPathDB" id="HostDB:ENSRNOG00000009192"/>
<dbReference type="eggNOG" id="KOG4705">
    <property type="taxonomic scope" value="Eukaryota"/>
</dbReference>
<dbReference type="HOGENOM" id="CLU_059802_0_0_1"/>
<dbReference type="InParanoid" id="Q5XI96"/>
<dbReference type="OrthoDB" id="29098at2759"/>
<dbReference type="PhylomeDB" id="Q5XI96"/>
<dbReference type="TreeFam" id="TF105250"/>
<dbReference type="PRO" id="PR:Q5XI96"/>
<dbReference type="Proteomes" id="UP000002494">
    <property type="component" value="Chromosome 15"/>
</dbReference>
<dbReference type="Bgee" id="ENSRNOG00000009192">
    <property type="expression patterns" value="Expressed in thymus and 19 other cell types or tissues"/>
</dbReference>
<dbReference type="GO" id="GO:0005654">
    <property type="term" value="C:nucleoplasm"/>
    <property type="evidence" value="ECO:0000318"/>
    <property type="project" value="GO_Central"/>
</dbReference>
<dbReference type="GO" id="GO:0032299">
    <property type="term" value="C:ribonuclease H2 complex"/>
    <property type="evidence" value="ECO:0000250"/>
    <property type="project" value="UniProtKB"/>
</dbReference>
<dbReference type="GO" id="GO:0048144">
    <property type="term" value="P:fibroblast proliferation"/>
    <property type="evidence" value="ECO:0000266"/>
    <property type="project" value="RGD"/>
</dbReference>
<dbReference type="GO" id="GO:0010467">
    <property type="term" value="P:gene expression"/>
    <property type="evidence" value="ECO:0000266"/>
    <property type="project" value="RGD"/>
</dbReference>
<dbReference type="GO" id="GO:0001701">
    <property type="term" value="P:in utero embryonic development"/>
    <property type="evidence" value="ECO:0000266"/>
    <property type="project" value="RGD"/>
</dbReference>
<dbReference type="GO" id="GO:0010629">
    <property type="term" value="P:negative regulation of gene expression"/>
    <property type="evidence" value="ECO:0000266"/>
    <property type="project" value="RGD"/>
</dbReference>
<dbReference type="GO" id="GO:0048146">
    <property type="term" value="P:positive regulation of fibroblast proliferation"/>
    <property type="evidence" value="ECO:0000266"/>
    <property type="project" value="RGD"/>
</dbReference>
<dbReference type="GO" id="GO:2000001">
    <property type="term" value="P:regulation of DNA damage checkpoint"/>
    <property type="evidence" value="ECO:0000266"/>
    <property type="project" value="RGD"/>
</dbReference>
<dbReference type="GO" id="GO:0010389">
    <property type="term" value="P:regulation of G2/M transition of mitotic cell cycle"/>
    <property type="evidence" value="ECO:0000266"/>
    <property type="project" value="RGD"/>
</dbReference>
<dbReference type="GO" id="GO:0009259">
    <property type="term" value="P:ribonucleotide metabolic process"/>
    <property type="evidence" value="ECO:0000266"/>
    <property type="project" value="RGD"/>
</dbReference>
<dbReference type="GO" id="GO:0006401">
    <property type="term" value="P:RNA catabolic process"/>
    <property type="evidence" value="ECO:0000250"/>
    <property type="project" value="UniProtKB"/>
</dbReference>
<dbReference type="CDD" id="cd09270">
    <property type="entry name" value="RNase_H2-B"/>
    <property type="match status" value="1"/>
</dbReference>
<dbReference type="FunFam" id="1.10.20.120:FF:000001">
    <property type="entry name" value="Ribonuclease H2 subunit B"/>
    <property type="match status" value="1"/>
</dbReference>
<dbReference type="FunFam" id="2.20.25.530:FF:000001">
    <property type="entry name" value="Ribonuclease H2 subunit B"/>
    <property type="match status" value="1"/>
</dbReference>
<dbReference type="Gene3D" id="1.10.20.120">
    <property type="match status" value="1"/>
</dbReference>
<dbReference type="Gene3D" id="2.20.25.530">
    <property type="match status" value="1"/>
</dbReference>
<dbReference type="InterPro" id="IPR040456">
    <property type="entry name" value="RNase_H2_suB"/>
</dbReference>
<dbReference type="InterPro" id="IPR019024">
    <property type="entry name" value="RNase_H2_suB_wHTH"/>
</dbReference>
<dbReference type="InterPro" id="IPR041195">
    <property type="entry name" value="Rnh202_N"/>
</dbReference>
<dbReference type="PANTHER" id="PTHR13383">
    <property type="entry name" value="RIBONUCLEASE H2 SUBUNIT B"/>
    <property type="match status" value="1"/>
</dbReference>
<dbReference type="PANTHER" id="PTHR13383:SF11">
    <property type="entry name" value="RIBONUCLEASE H2 SUBUNIT B"/>
    <property type="match status" value="1"/>
</dbReference>
<dbReference type="Pfam" id="PF09468">
    <property type="entry name" value="RNase_H2-Ydr279"/>
    <property type="match status" value="1"/>
</dbReference>
<dbReference type="Pfam" id="PF17745">
    <property type="entry name" value="Ydr279_N"/>
    <property type="match status" value="1"/>
</dbReference>
<gene>
    <name type="primary">Rnaseh2b</name>
</gene>
<comment type="function">
    <text evidence="1">Non catalytic subunit of RNase H2, an endonuclease that specifically degrades the RNA of RNA:DNA hybrids. Participates in DNA replication, possibly by mediating the removal of lagging-strand Okazaki fragment RNA primers during DNA replication. Mediates the excision of single ribonucleotides from DNA:RNA duplexes (By similarity).</text>
</comment>
<comment type="subunit">
    <text evidence="1">The RNase H2 complex is a heterotrimer composed of the catalytic subunit RNASEH2A and the non-catalytic subunits RNASEH2B and RNASEH2C.</text>
</comment>
<comment type="subcellular location">
    <subcellularLocation>
        <location evidence="1">Nucleus</location>
    </subcellularLocation>
</comment>
<comment type="similarity">
    <text evidence="3">Belongs to the RNase H2 subunit B family.</text>
</comment>
<keyword id="KW-0007">Acetylation</keyword>
<keyword id="KW-0539">Nucleus</keyword>
<keyword id="KW-0597">Phosphoprotein</keyword>
<keyword id="KW-1185">Reference proteome</keyword>
<evidence type="ECO:0000250" key="1"/>
<evidence type="ECO:0000250" key="2">
    <source>
        <dbReference type="UniProtKB" id="Q5TBB1"/>
    </source>
</evidence>
<evidence type="ECO:0000305" key="3"/>
<proteinExistence type="evidence at transcript level"/>
<protein>
    <recommendedName>
        <fullName>Ribonuclease H2 subunit B</fullName>
        <shortName>RNase H2 subunit B</shortName>
    </recommendedName>
    <alternativeName>
        <fullName>Ribonuclease HI subunit B</fullName>
    </alternativeName>
</protein>
<name>RNH2B_RAT</name>
<accession>Q5XI96</accession>
<sequence length="307" mass="34573">MAGGRDRGDLAARQLVFLLPEYLKDASRKSKSGLLFVKLVNPHSGEGATYLIDACLQKLFEIKVFKEKHHSWFINQSVQSGGLLHFATPMDPLFLLLHYLIKAGKEGKYQPLDQVVVDDKFPDCTLLLRFPELEKSLRHVTEEKEVNSKKYYKYSTEKTLKWLEKKVNQTVAALKANHVNVGARVQSSAYFSGVQVSRDKEEDYVRYAHGLISDYIPKELSDDLSKLLKLPEPPASLPNPPAKKLKLADEPVEAKEDYTKFNTKDLKNGKKNSKMTAAQKALAKVDKSGMKSIDAFFGAKNKKTGKI</sequence>
<reference key="1">
    <citation type="journal article" date="2004" name="Genome Res.">
        <title>The status, quality, and expansion of the NIH full-length cDNA project: the Mammalian Gene Collection (MGC).</title>
        <authorList>
            <consortium name="The MGC Project Team"/>
        </authorList>
    </citation>
    <scope>NUCLEOTIDE SEQUENCE [LARGE SCALE MRNA]</scope>
    <source>
        <tissue>Kidney</tissue>
    </source>
</reference>
<feature type="initiator methionine" description="Removed" evidence="2">
    <location>
        <position position="1"/>
    </location>
</feature>
<feature type="chain" id="PRO_0000248380" description="Ribonuclease H2 subunit B">
    <location>
        <begin position="2"/>
        <end position="307"/>
    </location>
</feature>
<feature type="modified residue" description="N-acetylalanine" evidence="2">
    <location>
        <position position="2"/>
    </location>
</feature>
<feature type="modified residue" description="N6-acetyllysine" evidence="2">
    <location>
        <position position="291"/>
    </location>
</feature>
<feature type="modified residue" description="Phosphoserine" evidence="2">
    <location>
        <position position="292"/>
    </location>
</feature>
<organism>
    <name type="scientific">Rattus norvegicus</name>
    <name type="common">Rat</name>
    <dbReference type="NCBI Taxonomy" id="10116"/>
    <lineage>
        <taxon>Eukaryota</taxon>
        <taxon>Metazoa</taxon>
        <taxon>Chordata</taxon>
        <taxon>Craniata</taxon>
        <taxon>Vertebrata</taxon>
        <taxon>Euteleostomi</taxon>
        <taxon>Mammalia</taxon>
        <taxon>Eutheria</taxon>
        <taxon>Euarchontoglires</taxon>
        <taxon>Glires</taxon>
        <taxon>Rodentia</taxon>
        <taxon>Myomorpha</taxon>
        <taxon>Muroidea</taxon>
        <taxon>Muridae</taxon>
        <taxon>Murinae</taxon>
        <taxon>Rattus</taxon>
    </lineage>
</organism>